<keyword id="KW-0150">Chloroplast</keyword>
<keyword id="KW-0934">Plastid</keyword>
<accession>Q3BAI2</accession>
<geneLocation type="chloroplast"/>
<sequence length="91" mass="10596">MQVVRIFTDMSISPSLSPRQCPDRYAFRAGRNLPDKEFRYLRTVLVTAAVHRGFGRRLPCHQVTNFLDLPALGRRQPPYMVLRLCGDLCFW</sequence>
<dbReference type="EMBL" id="AY916449">
    <property type="protein sequence ID" value="AAW82572.1"/>
    <property type="molecule type" value="Genomic_DNA"/>
</dbReference>
<dbReference type="RefSeq" id="YP_358636.1">
    <property type="nucleotide sequence ID" value="NC_007499.1"/>
</dbReference>
<dbReference type="GeneID" id="3741793"/>
<dbReference type="GO" id="GO:0009507">
    <property type="term" value="C:chloroplast"/>
    <property type="evidence" value="ECO:0007669"/>
    <property type="project" value="UniProtKB-SubCell"/>
</dbReference>
<dbReference type="AntiFam" id="ANF00025">
    <property type="entry name" value="Antisense to 23S rRNA"/>
</dbReference>
<name>YCX91_PHAAO</name>
<organism>
    <name type="scientific">Phalaenopsis aphrodite subsp. formosana</name>
    <name type="common">Moth orchid</name>
    <dbReference type="NCBI Taxonomy" id="308872"/>
    <lineage>
        <taxon>Eukaryota</taxon>
        <taxon>Viridiplantae</taxon>
        <taxon>Streptophyta</taxon>
        <taxon>Embryophyta</taxon>
        <taxon>Tracheophyta</taxon>
        <taxon>Spermatophyta</taxon>
        <taxon>Magnoliopsida</taxon>
        <taxon>Liliopsida</taxon>
        <taxon>Asparagales</taxon>
        <taxon>Orchidaceae</taxon>
        <taxon>Epidendroideae</taxon>
        <taxon>Vandeae</taxon>
        <taxon>Aeridinae</taxon>
        <taxon>Phalaenopsis</taxon>
    </lineage>
</organism>
<protein>
    <recommendedName>
        <fullName>Uncharacterized protein ORF91</fullName>
    </recommendedName>
</protein>
<comment type="subcellular location">
    <subcellularLocation>
        <location>Plastid</location>
        <location>Chloroplast</location>
    </subcellularLocation>
</comment>
<proteinExistence type="predicted"/>
<feature type="chain" id="PRO_0000246135" description="Uncharacterized protein ORF91">
    <location>
        <begin position="1"/>
        <end position="91"/>
    </location>
</feature>
<reference key="1">
    <citation type="journal article" date="2006" name="Mol. Biol. Evol.">
        <title>The chloroplast genome of Phalaenopsis aphrodite (Orchidaceae): comparative analysis of evolutionary rate with that of grasses and its phylogenetic implications.</title>
        <authorList>
            <person name="Chang C.-C."/>
            <person name="Lin H.-C."/>
            <person name="Lin I.-P."/>
            <person name="Chow T.-Y."/>
            <person name="Chen H.-H."/>
            <person name="Chen W.-H."/>
            <person name="Cheng C.-H."/>
            <person name="Lin C.-Y."/>
            <person name="Liu S.-M."/>
            <person name="Chang C.-C."/>
            <person name="Chaw S.-M."/>
        </authorList>
    </citation>
    <scope>NUCLEOTIDE SEQUENCE [LARGE SCALE GENOMIC DNA]</scope>
    <source>
        <strain>cv. Taisugar TS-97</strain>
    </source>
</reference>